<comment type="function">
    <text>Promotes the exchange of GDP for GTP in EF-1-alpha/GDP, thus allowing the regeneration of EF-1-alpha/GTP that could then be used to form the ternary complex EF-1-alpha/GTP/AAtRNA.</text>
</comment>
<comment type="miscellaneous">
    <text>Binds calcium.</text>
</comment>
<comment type="similarity">
    <text evidence="1">Belongs to the EF-1-beta/EF-1-delta family.</text>
</comment>
<proteinExistence type="evidence at protein level"/>
<sequence length="89" mass="9532">MGDVVATIKVMPESPDVDLEALKKEIQERIPEGTELHKIDEEPIAFGLVALNVMVVVGDAEGGTEAAEESLSGIEGVSNIEVTDVRRLM</sequence>
<feature type="chain" id="PRO_0000155060" description="Elongation factor 1-beta">
    <location>
        <begin position="1"/>
        <end position="89"/>
    </location>
</feature>
<feature type="strand" evidence="2">
    <location>
        <begin position="4"/>
        <end position="15"/>
    </location>
</feature>
<feature type="helix" evidence="2">
    <location>
        <begin position="19"/>
        <end position="29"/>
    </location>
</feature>
<feature type="strand" evidence="2">
    <location>
        <begin position="34"/>
        <end position="36"/>
    </location>
</feature>
<feature type="strand" evidence="2">
    <location>
        <begin position="41"/>
        <end position="43"/>
    </location>
</feature>
<feature type="strand" evidence="2">
    <location>
        <begin position="45"/>
        <end position="47"/>
    </location>
</feature>
<feature type="strand" evidence="2">
    <location>
        <begin position="49"/>
        <end position="60"/>
    </location>
</feature>
<feature type="helix" evidence="2">
    <location>
        <begin position="62"/>
        <end position="65"/>
    </location>
</feature>
<feature type="helix" evidence="2">
    <location>
        <begin position="66"/>
        <end position="71"/>
    </location>
</feature>
<feature type="strand" evidence="2">
    <location>
        <begin position="76"/>
        <end position="87"/>
    </location>
</feature>
<dbReference type="EMBL" id="AE000666">
    <property type="protein sequence ID" value="AAB86171.1"/>
    <property type="molecule type" value="Genomic_DNA"/>
</dbReference>
<dbReference type="PIR" id="B69094">
    <property type="entry name" value="B69094"/>
</dbReference>
<dbReference type="RefSeq" id="WP_010877307.1">
    <property type="nucleotide sequence ID" value="NC_000916.1"/>
</dbReference>
<dbReference type="PDB" id="1GH8">
    <property type="method" value="NMR"/>
    <property type="chains" value="A=1-89"/>
</dbReference>
<dbReference type="PDBsum" id="1GH8"/>
<dbReference type="BMRB" id="O27734"/>
<dbReference type="SMR" id="O27734"/>
<dbReference type="FunCoup" id="O27734">
    <property type="interactions" value="5"/>
</dbReference>
<dbReference type="STRING" id="187420.MTH_1699"/>
<dbReference type="PaxDb" id="187420-MTH_1699"/>
<dbReference type="EnsemblBacteria" id="AAB86171">
    <property type="protein sequence ID" value="AAB86171"/>
    <property type="gene ID" value="MTH_1699"/>
</dbReference>
<dbReference type="KEGG" id="mth:MTH_1699"/>
<dbReference type="PATRIC" id="fig|187420.15.peg.1660"/>
<dbReference type="HOGENOM" id="CLU_165896_0_0_2"/>
<dbReference type="InParanoid" id="O27734"/>
<dbReference type="EvolutionaryTrace" id="O27734"/>
<dbReference type="Proteomes" id="UP000005223">
    <property type="component" value="Chromosome"/>
</dbReference>
<dbReference type="GO" id="GO:0003746">
    <property type="term" value="F:translation elongation factor activity"/>
    <property type="evidence" value="ECO:0007669"/>
    <property type="project" value="UniProtKB-UniRule"/>
</dbReference>
<dbReference type="CDD" id="cd00292">
    <property type="entry name" value="EF1B"/>
    <property type="match status" value="1"/>
</dbReference>
<dbReference type="Gene3D" id="3.30.70.60">
    <property type="match status" value="1"/>
</dbReference>
<dbReference type="HAMAP" id="MF_00043">
    <property type="entry name" value="EF1_beta"/>
    <property type="match status" value="1"/>
</dbReference>
<dbReference type="InterPro" id="IPR036219">
    <property type="entry name" value="eEF-1beta-like_sf"/>
</dbReference>
<dbReference type="InterPro" id="IPR014038">
    <property type="entry name" value="EF1B_bsu/dsu_GNE"/>
</dbReference>
<dbReference type="InterPro" id="IPR014717">
    <property type="entry name" value="Transl_elong_EF1B/ribsomal_bS6"/>
</dbReference>
<dbReference type="InterPro" id="IPR004542">
    <property type="entry name" value="Transl_elong_EF1B_B_arc"/>
</dbReference>
<dbReference type="NCBIfam" id="TIGR00489">
    <property type="entry name" value="aEF-1_beta"/>
    <property type="match status" value="1"/>
</dbReference>
<dbReference type="NCBIfam" id="NF001670">
    <property type="entry name" value="PRK00435.1"/>
    <property type="match status" value="1"/>
</dbReference>
<dbReference type="PANTHER" id="PTHR39647">
    <property type="entry name" value="ELONGATION FACTOR 1-BETA"/>
    <property type="match status" value="1"/>
</dbReference>
<dbReference type="PANTHER" id="PTHR39647:SF1">
    <property type="entry name" value="ELONGATION FACTOR 1-BETA"/>
    <property type="match status" value="1"/>
</dbReference>
<dbReference type="Pfam" id="PF00736">
    <property type="entry name" value="EF1_GNE"/>
    <property type="match status" value="1"/>
</dbReference>
<dbReference type="PIRSF" id="PIRSF006521">
    <property type="entry name" value="Transl_elong_EF1B_B_arc"/>
    <property type="match status" value="1"/>
</dbReference>
<dbReference type="SMART" id="SM00888">
    <property type="entry name" value="EF1_GNE"/>
    <property type="match status" value="1"/>
</dbReference>
<dbReference type="SUPFAM" id="SSF54984">
    <property type="entry name" value="eEF-1beta-like"/>
    <property type="match status" value="1"/>
</dbReference>
<protein>
    <recommendedName>
        <fullName>Elongation factor 1-beta</fullName>
        <shortName>EF-1-beta</shortName>
    </recommendedName>
    <alternativeName>
        <fullName>aEF-1beta</fullName>
    </alternativeName>
</protein>
<reference key="1">
    <citation type="journal article" date="1997" name="J. Bacteriol.">
        <title>Complete genome sequence of Methanobacterium thermoautotrophicum deltaH: functional analysis and comparative genomics.</title>
        <authorList>
            <person name="Smith D.R."/>
            <person name="Doucette-Stamm L.A."/>
            <person name="Deloughery C."/>
            <person name="Lee H.-M."/>
            <person name="Dubois J."/>
            <person name="Aldredge T."/>
            <person name="Bashirzadeh R."/>
            <person name="Blakely D."/>
            <person name="Cook R."/>
            <person name="Gilbert K."/>
            <person name="Harrison D."/>
            <person name="Hoang L."/>
            <person name="Keagle P."/>
            <person name="Lumm W."/>
            <person name="Pothier B."/>
            <person name="Qiu D."/>
            <person name="Spadafora R."/>
            <person name="Vicare R."/>
            <person name="Wang Y."/>
            <person name="Wierzbowski J."/>
            <person name="Gibson R."/>
            <person name="Jiwani N."/>
            <person name="Caruso A."/>
            <person name="Bush D."/>
            <person name="Safer H."/>
            <person name="Patwell D."/>
            <person name="Prabhakar S."/>
            <person name="McDougall S."/>
            <person name="Shimer G."/>
            <person name="Goyal A."/>
            <person name="Pietrovski S."/>
            <person name="Church G.M."/>
            <person name="Daniels C.J."/>
            <person name="Mao J.-I."/>
            <person name="Rice P."/>
            <person name="Noelling J."/>
            <person name="Reeve J.N."/>
        </authorList>
    </citation>
    <scope>NUCLEOTIDE SEQUENCE [LARGE SCALE GENOMIC DNA]</scope>
    <source>
        <strain>ATCC 29096 / DSM 1053 / JCM 10044 / NBRC 100330 / Delta H</strain>
    </source>
</reference>
<reference key="2">
    <citation type="journal article" date="2000" name="J. Biomol. NMR">
        <title>Rapid fold and structure determination of the archaeal translation elongation factor 1beta from Methanobacterium thermoautotrophicum.</title>
        <authorList>
            <person name="Kozlov G."/>
            <person name="Ekiel I."/>
            <person name="Beglova N."/>
            <person name="Yee A."/>
            <person name="Dharamsi A."/>
            <person name="Engel A."/>
            <person name="Siddiqui N."/>
            <person name="Nong A."/>
            <person name="Gehring K."/>
        </authorList>
    </citation>
    <scope>STRUCTURE BY NMR</scope>
</reference>
<gene>
    <name type="primary">ef1b</name>
    <name type="ordered locus">MTH_1699</name>
</gene>
<name>EF1B_METTH</name>
<keyword id="KW-0002">3D-structure</keyword>
<keyword id="KW-0106">Calcium</keyword>
<keyword id="KW-0251">Elongation factor</keyword>
<keyword id="KW-0648">Protein biosynthesis</keyword>
<keyword id="KW-1185">Reference proteome</keyword>
<evidence type="ECO:0000305" key="1"/>
<evidence type="ECO:0007829" key="2">
    <source>
        <dbReference type="PDB" id="1GH8"/>
    </source>
</evidence>
<accession>O27734</accession>
<organism>
    <name type="scientific">Methanothermobacter thermautotrophicus (strain ATCC 29096 / DSM 1053 / JCM 10044 / NBRC 100330 / Delta H)</name>
    <name type="common">Methanobacterium thermoautotrophicum</name>
    <dbReference type="NCBI Taxonomy" id="187420"/>
    <lineage>
        <taxon>Archaea</taxon>
        <taxon>Methanobacteriati</taxon>
        <taxon>Methanobacteriota</taxon>
        <taxon>Methanomada group</taxon>
        <taxon>Methanobacteria</taxon>
        <taxon>Methanobacteriales</taxon>
        <taxon>Methanobacteriaceae</taxon>
        <taxon>Methanothermobacter</taxon>
    </lineage>
</organism>